<accession>Q9UQ90</accession>
<accession>O75756</accession>
<accession>Q2TB70</accession>
<accession>Q58F00</accession>
<accession>Q96IB0</accession>
<protein>
    <recommendedName>
        <fullName evidence="21">Mitochondrial inner membrane m-AAA protease component paraplegin</fullName>
        <ecNumber evidence="6 16 17">3.4.24.-</ecNumber>
        <ecNumber evidence="3">3.6.-.-</ecNumber>
    </recommendedName>
    <alternativeName>
        <fullName evidence="22">Cell matrix adhesion regulator</fullName>
    </alternativeName>
    <alternativeName>
        <fullName evidence="20">Paraplegin</fullName>
    </alternativeName>
    <alternativeName>
        <fullName evidence="22">Spastic paraplegia 7 protein</fullName>
    </alternativeName>
</protein>
<reference key="1">
    <citation type="journal article" date="1998" name="Cell">
        <title>Spastic paraplegia and OXPHOS impairment caused by mutations in paraplegin, a nuclear-encoded mitochondrial metalloprotease.</title>
        <authorList>
            <person name="Casari G."/>
            <person name="De Fusco M."/>
            <person name="Ciarmatori S."/>
            <person name="Zeviani M."/>
            <person name="Mora M."/>
            <person name="Fernandez P."/>
            <person name="De Michele G."/>
            <person name="Filla A."/>
            <person name="Cocozza S."/>
            <person name="Marconi R."/>
            <person name="Duerr A."/>
            <person name="Fontaine B."/>
            <person name="Ballabio A."/>
        </authorList>
    </citation>
    <scope>NUCLEOTIDE SEQUENCE [MRNA] (ISOFORM 1)</scope>
    <scope>FUNCTION</scope>
    <scope>SUBCELLULAR LOCATION</scope>
    <scope>INVOLVEMENT IN SPG7</scope>
</reference>
<reference key="2">
    <citation type="journal article" date="1999" name="Hum. Genet.">
        <title>Genomic structure and expression analysis of the spastic paraplegia gene, SPG7.</title>
        <authorList>
            <person name="Settasatian C."/>
            <person name="Whitmore S.A."/>
            <person name="Crawford J."/>
            <person name="Bilton R.L."/>
            <person name="Cleton-Jansen A.-M."/>
            <person name="Sutherland G.R."/>
            <person name="Callen D.F."/>
        </authorList>
    </citation>
    <scope>NUCLEOTIDE SEQUENCE [GENOMIC DNA] (ISOFORM 1)</scope>
</reference>
<reference key="3">
    <citation type="journal article" date="2004" name="Genome Res.">
        <title>The status, quality, and expansion of the NIH full-length cDNA project: the Mammalian Gene Collection (MGC).</title>
        <authorList>
            <consortium name="The MGC Project Team"/>
        </authorList>
    </citation>
    <scope>NUCLEOTIDE SEQUENCE [LARGE SCALE MRNA] (ISOFORMS 1 AND 2)</scope>
    <source>
        <tissue>Duodenum</tissue>
        <tissue>Placenta</tissue>
    </source>
</reference>
<reference key="4">
    <citation type="journal article" date="2001" name="Genomics">
        <title>Molecular and functional analyses of the human and mouse genes encoding AFG3L1, a mitochondrial metalloprotease homologous to the human spastic paraplegia protein.</title>
        <authorList>
            <person name="Kremmidiotis G."/>
            <person name="Gardner A.E."/>
            <person name="Settasatian C."/>
            <person name="Savoia A."/>
            <person name="Sutherland G.R."/>
            <person name="Callen D.F."/>
        </authorList>
    </citation>
    <scope>FUNCTION</scope>
</reference>
<reference key="5">
    <citation type="journal article" date="2003" name="J. Cell Biol.">
        <title>Loss of m-AAA protease in mitochondria causes complex I deficiency and increased sensitivity to oxidative stress in hereditary spastic paraplegia.</title>
        <authorList>
            <person name="Atorino L."/>
            <person name="Silvestri L."/>
            <person name="Koppen M."/>
            <person name="Cassina L."/>
            <person name="Ballabio A."/>
            <person name="Marconi R."/>
            <person name="Langer T."/>
            <person name="Casari G."/>
        </authorList>
    </citation>
    <scope>INTERACTION WITH AFG3L2</scope>
</reference>
<reference key="6">
    <citation type="journal article" date="2010" name="Am. J. Hum. Genet.">
        <title>Identification of a frameshift mutation in Osterix in a patient with recessive osteogenesis imperfecta.</title>
        <authorList>
            <person name="Lapunzina P."/>
            <person name="Aglan M."/>
            <person name="Temtamy S."/>
            <person name="Caparros-Martin J.A."/>
            <person name="Valencia M."/>
            <person name="Leton R."/>
            <person name="Martinez-Glez V."/>
            <person name="Elhossini R."/>
            <person name="Amr K."/>
            <person name="Vilaboa N."/>
            <person name="Ruiz-Perez V.L."/>
        </authorList>
    </citation>
    <scope>INVOLVEMENT IN OSTEOGENESIS IMPERFECTA</scope>
</reference>
<reference key="7">
    <citation type="journal article" date="2015" name="Mol. Cell">
        <title>SPG7 is an essential and conserved component of the mitochondrial permeability transition pore.</title>
        <authorList>
            <person name="Shanmughapriya S."/>
            <person name="Rajan S."/>
            <person name="Hoffman N.E."/>
            <person name="Higgins A.M."/>
            <person name="Tomar D."/>
            <person name="Nemani N."/>
            <person name="Hines K.J."/>
            <person name="Smith D.J."/>
            <person name="Eguchi A."/>
            <person name="Vallem S."/>
            <person name="Shaikh F."/>
            <person name="Cheung M."/>
            <person name="Leonard N.J."/>
            <person name="Stolakis R.S."/>
            <person name="Wolfers M.P."/>
            <person name="Ibetti J."/>
            <person name="Chuprun J.K."/>
            <person name="Jog N.R."/>
            <person name="Houser S.R."/>
            <person name="Koch W.J."/>
            <person name="Elrod J.W."/>
            <person name="Madesh M."/>
        </authorList>
    </citation>
    <scope>FUNCTION</scope>
    <scope>IDENTIFICATION IN THE MITOCHONDRIAL PERMEABILITY TRANSITION PORE COMPLEX</scope>
    <scope>INTERACTION WITH AFG3L2; PPIF AND VDAC1</scope>
    <scope>MUTAGENESIS OF HIS-574; GLU-575 AND GLY-577</scope>
</reference>
<reference key="8">
    <citation type="journal article" date="2015" name="Proteomics">
        <title>N-terminome analysis of the human mitochondrial proteome.</title>
        <authorList>
            <person name="Vaca Jacome A.S."/>
            <person name="Rabilloud T."/>
            <person name="Schaeffer-Reiss C."/>
            <person name="Rompais M."/>
            <person name="Ayoub D."/>
            <person name="Lane L."/>
            <person name="Bairoch A."/>
            <person name="Van Dorsselaer A."/>
            <person name="Carapito C."/>
        </authorList>
    </citation>
    <scope>IDENTIFICATION BY MASS SPECTROMETRY [LARGE SCALE ANALYSIS]</scope>
</reference>
<reference key="9">
    <citation type="journal article" date="2016" name="Mol. Cell">
        <title>Mitochondrial protein interaction mapping identifies regulators of respiratory chain function.</title>
        <authorList>
            <person name="Floyd B.J."/>
            <person name="Wilkerson E.M."/>
            <person name="Veling M.T."/>
            <person name="Minogue C.E."/>
            <person name="Xia C."/>
            <person name="Beebe E.T."/>
            <person name="Wrobel R.L."/>
            <person name="Cho H."/>
            <person name="Kremer L.S."/>
            <person name="Alston C.L."/>
            <person name="Gromek K.A."/>
            <person name="Dolan B.K."/>
            <person name="Ulbrich A."/>
            <person name="Stefely J.A."/>
            <person name="Bohl S.L."/>
            <person name="Werner K.M."/>
            <person name="Jochem A."/>
            <person name="Westphall M.S."/>
            <person name="Rensvold J.W."/>
            <person name="Taylor R.W."/>
            <person name="Prokisch H."/>
            <person name="Kim J.J."/>
            <person name="Coon J.J."/>
            <person name="Pagliarini D.J."/>
        </authorList>
    </citation>
    <scope>INTERACTION WITH MAIP1</scope>
</reference>
<reference key="10">
    <citation type="journal article" date="2017" name="Proc. Natl. Acad. Sci. U.S.A.">
        <title>Proteolytic control of the mitochondrial calcium uniporter complex.</title>
        <authorList>
            <person name="Tsai C.W."/>
            <person name="Wu Y."/>
            <person name="Pao P.C."/>
            <person name="Phillips C.B."/>
            <person name="Williams C."/>
            <person name="Miller C."/>
            <person name="Ranaghan M."/>
            <person name="Tsai M.F."/>
        </authorList>
    </citation>
    <scope>FUNCTION</scope>
    <scope>IDENTIFICATION IN THE M-AAA PROTEASE COMPLEX</scope>
</reference>
<reference key="11">
    <citation type="journal article" date="2019" name="J. Biol. Chem.">
        <title>SPG7 targets the m-AAA protease complex to process MCU for uniporter assembly, Ca2+ influx, and regulation of mitochondrial permeability transition pore opening.</title>
        <authorList>
            <person name="Hurst S."/>
            <person name="Baggett A."/>
            <person name="Csordas G."/>
            <person name="Sheu S.S."/>
        </authorList>
    </citation>
    <scope>FUNCTION</scope>
    <scope>MUTAGENESIS OF 574-HIS--GLY-577</scope>
</reference>
<reference key="12">
    <citation type="journal article" date="2009" name="PLoS ONE">
        <title>Crystal structure of the ATPase domain of the human AAA+ protein paraplegin/SPG7.</title>
        <authorList>
            <person name="Karlberg T."/>
            <person name="van den Berg S."/>
            <person name="Hammarstrom M."/>
            <person name="Sagemark J."/>
            <person name="Johansson I."/>
            <person name="Holmberg-Schiavone L."/>
            <person name="Schuler H."/>
        </authorList>
    </citation>
    <scope>X-RAY CRYSTALLOGRAPHY (2.22 ANGSTROMS) OF 305-565 IN COMPLEX WITH ATP ANALOG ADP</scope>
</reference>
<reference key="13">
    <citation type="journal article" date="2006" name="Neurology">
        <title>Mutation analysis of the paraplegin gene (SPG7) in patients with hereditary spastic paraplegia.</title>
        <authorList>
            <person name="Elleuch N."/>
            <person name="Depienne C."/>
            <person name="Benomar A."/>
            <person name="Hernandez A.M."/>
            <person name="Ferrer X."/>
            <person name="Fontaine B."/>
            <person name="Grid D."/>
            <person name="Tallaksen C.M.E."/>
            <person name="Zemmouri R."/>
            <person name="Stevanin G."/>
            <person name="Durr A."/>
            <person name="Brice A."/>
        </authorList>
    </citation>
    <scope>VARIANTS SPG7 VAL-510 AND VAL-581 DEL</scope>
    <scope>VARIANTS THR-2; GLN-82 DEL; PRO-284; HIS-294; GLN-486; ALA-503; LEU-545; THR-603; LEU-635; THR-645; HIS-650; GLN-688 AND ASP-730</scope>
</reference>
<reference key="14">
    <citation type="journal article" date="2007" name="Neurology">
        <title>A novel form of autosomal recessive hereditary spastic paraplegia caused by a new SPG7 mutation.</title>
        <authorList>
            <person name="Warnecke T."/>
            <person name="Duning T."/>
            <person name="Schwan A."/>
            <person name="Lohmann H."/>
            <person name="Epplen J.T."/>
            <person name="Young P."/>
        </authorList>
    </citation>
    <scope>VARIANT SPG7 THR-692</scope>
</reference>
<reference key="15">
    <citation type="journal article" date="2010" name="Hum. Mutat.">
        <title>Functional evaluation of paraplegin mutations by a yeast complementation assay.</title>
        <authorList>
            <person name="Bonn F."/>
            <person name="Pantakani K."/>
            <person name="Shoukier M."/>
            <person name="Langer T."/>
            <person name="Mannan A.U."/>
        </authorList>
    </citation>
    <scope>VARIANTS SPG7 SER-349; VAL-510 AND CYS-583</scope>
    <scope>VARIANTS ALA-503 AND GLN-688</scope>
    <scope>CHARACTERIZATION OF VARIANTS SPG7 SER-349; VAL-510 AND CYS-583</scope>
    <scope>CHARACTERIZATION OF VARIANTS ALA-503 AND GLN-688</scope>
</reference>
<reference key="16">
    <citation type="journal article" date="2016" name="Brain">
        <title>Genetic and phenotypic characterization of complex hereditary spastic paraplegia.</title>
        <authorList>
            <person name="Kara E."/>
            <person name="Tucci A."/>
            <person name="Manzoni C."/>
            <person name="Lynch D.S."/>
            <person name="Elpidorou M."/>
            <person name="Bettencourt C."/>
            <person name="Chelban V."/>
            <person name="Manole A."/>
            <person name="Hamed S.A."/>
            <person name="Haridy N.A."/>
            <person name="Federoff M."/>
            <person name="Preza E."/>
            <person name="Hughes D."/>
            <person name="Pittman A."/>
            <person name="Jaunmuktane Z."/>
            <person name="Brandner S."/>
            <person name="Xiromerisiou G."/>
            <person name="Wiethoff S."/>
            <person name="Schottlaender L."/>
            <person name="Proukakis C."/>
            <person name="Morris H."/>
            <person name="Warner T."/>
            <person name="Bhatia K.P."/>
            <person name="Korlipara L.V."/>
            <person name="Singleton A.B."/>
            <person name="Hardy J."/>
            <person name="Wood N.W."/>
            <person name="Lewis P.A."/>
            <person name="Houlden H."/>
        </authorList>
    </citation>
    <scope>VARIANT SPG7 VAL-510</scope>
</reference>
<feature type="transit peptide" description="Mitochondrion" evidence="1">
    <location>
        <begin position="1"/>
        <end position="43"/>
    </location>
</feature>
<feature type="propeptide" id="PRO_0000442305" description="Removed in mature form" evidence="1">
    <location>
        <begin position="44"/>
        <end position="105"/>
    </location>
</feature>
<feature type="chain" id="PRO_0000084675" description="Mitochondrial inner membrane m-AAA protease component paraplegin">
    <location>
        <begin position="106"/>
        <end position="795"/>
    </location>
</feature>
<feature type="topological domain" description="Mitochondrial matrix" evidence="4">
    <location>
        <begin position="106"/>
        <end position="144"/>
    </location>
</feature>
<feature type="transmembrane region" description="Helical" evidence="4">
    <location>
        <begin position="145"/>
        <end position="165"/>
    </location>
</feature>
<feature type="topological domain" description="Mitochondrial intermembrane" evidence="4">
    <location>
        <begin position="166"/>
        <end position="248"/>
    </location>
</feature>
<feature type="transmembrane region" description="Helical" evidence="4">
    <location>
        <begin position="249"/>
        <end position="269"/>
    </location>
</feature>
<feature type="topological domain" description="Mitochondrial matrix" evidence="4">
    <location>
        <begin position="270"/>
        <end position="795"/>
    </location>
</feature>
<feature type="region of interest" description="Disordered" evidence="5">
    <location>
        <begin position="108"/>
        <end position="133"/>
    </location>
</feature>
<feature type="region of interest" description="Interaction with PPIF" evidence="13">
    <location>
        <begin position="701"/>
        <end position="795"/>
    </location>
</feature>
<feature type="region of interest" description="Disordered" evidence="5">
    <location>
        <begin position="751"/>
        <end position="795"/>
    </location>
</feature>
<feature type="compositionally biased region" description="Basic and acidic residues" evidence="5">
    <location>
        <begin position="109"/>
        <end position="133"/>
    </location>
</feature>
<feature type="active site" evidence="2">
    <location>
        <position position="575"/>
    </location>
</feature>
<feature type="binding site" evidence="10 23">
    <location>
        <position position="312"/>
    </location>
    <ligand>
        <name>ATP</name>
        <dbReference type="ChEBI" id="CHEBI:30616"/>
    </ligand>
</feature>
<feature type="binding site" evidence="10 23">
    <location>
        <position position="352"/>
    </location>
    <ligand>
        <name>ATP</name>
        <dbReference type="ChEBI" id="CHEBI:30616"/>
    </ligand>
</feature>
<feature type="binding site" evidence="10 23">
    <location>
        <position position="353"/>
    </location>
    <ligand>
        <name>ATP</name>
        <dbReference type="ChEBI" id="CHEBI:30616"/>
    </ligand>
</feature>
<feature type="binding site" evidence="10 23">
    <location>
        <position position="354"/>
    </location>
    <ligand>
        <name>ATP</name>
        <dbReference type="ChEBI" id="CHEBI:30616"/>
    </ligand>
</feature>
<feature type="binding site" evidence="10 23">
    <location>
        <position position="355"/>
    </location>
    <ligand>
        <name>ATP</name>
        <dbReference type="ChEBI" id="CHEBI:30616"/>
    </ligand>
</feature>
<feature type="binding site" evidence="10 23">
    <location>
        <position position="356"/>
    </location>
    <ligand>
        <name>ATP</name>
        <dbReference type="ChEBI" id="CHEBI:30616"/>
    </ligand>
</feature>
<feature type="binding site" evidence="10 23">
    <location>
        <position position="357"/>
    </location>
    <ligand>
        <name>ATP</name>
        <dbReference type="ChEBI" id="CHEBI:30616"/>
    </ligand>
</feature>
<feature type="binding site" evidence="3">
    <location>
        <position position="574"/>
    </location>
    <ligand>
        <name>Zn(2+)</name>
        <dbReference type="ChEBI" id="CHEBI:29105"/>
        <note>catalytic</note>
    </ligand>
</feature>
<feature type="binding site" evidence="3">
    <location>
        <position position="578"/>
    </location>
    <ligand>
        <name>Zn(2+)</name>
        <dbReference type="ChEBI" id="CHEBI:29105"/>
        <note>catalytic</note>
    </ligand>
</feature>
<feature type="binding site" evidence="3">
    <location>
        <position position="650"/>
    </location>
    <ligand>
        <name>Zn(2+)</name>
        <dbReference type="ChEBI" id="CHEBI:29105"/>
        <note>catalytic</note>
    </ligand>
</feature>
<feature type="modified residue" description="3'-nitrotyrosine" evidence="1">
    <location>
        <position position="505"/>
    </location>
</feature>
<feature type="splice variant" id="VSP_009192" description="In isoform 2." evidence="19">
    <original>MGTTDHVIVLASTNRADILDGALMRPGRLDRHVFIDLPTLQERREIF</original>
    <variation>ASLDQLPSQGTMRKLRGKTPACSCLTEPTGSRRAMEGHSLCWGCLLH</variation>
    <location>
        <begin position="443"/>
        <end position="489"/>
    </location>
</feature>
<feature type="splice variant" id="VSP_009193" description="In isoform 2." evidence="19">
    <location>
        <begin position="490"/>
        <end position="795"/>
    </location>
</feature>
<feature type="sequence variant" id="VAR_063603" description="In dbSNP:rs535030441." evidence="8">
    <original>A</original>
    <variation>T</variation>
    <location>
        <position position="2"/>
    </location>
</feature>
<feature type="sequence variant" id="VAR_063604" description="Might be implicated in the hereditary spastic paraplegia phenotype." evidence="8">
    <location>
        <position position="82"/>
    </location>
</feature>
<feature type="sequence variant" id="VAR_063605" description="Might be implicated in the hereditary spastic paraplegia phenotype; requires 2 nucleotide substitutions." evidence="8">
    <original>F</original>
    <variation>P</variation>
    <location>
        <position position="284"/>
    </location>
</feature>
<feature type="sequence variant" id="VAR_063606" description="In dbSNP:rs115661328." evidence="8">
    <original>R</original>
    <variation>H</variation>
    <location>
        <position position="294"/>
    </location>
</feature>
<feature type="sequence variant" id="VAR_063607" description="In SPG7; function impaired; dbSNP:rs141659620." evidence="11">
    <original>G</original>
    <variation>S</variation>
    <location>
        <position position="349"/>
    </location>
</feature>
<feature type="sequence variant" id="VAR_063608" description="In dbSNP:rs111475461.">
    <original>R</original>
    <variation>Q</variation>
    <location>
        <position position="486"/>
    </location>
</feature>
<feature type="sequence variant" id="VAR_017433" description="In dbSNP:rs2292954." evidence="8 11">
    <original>T</original>
    <variation>A</variation>
    <location>
        <position position="503"/>
    </location>
</feature>
<feature type="sequence variant" id="VAR_063609" description="In SPG7; function impaired; dbSNP:rs61755320." evidence="8 11 14">
    <original>A</original>
    <variation>V</variation>
    <location>
        <position position="510"/>
    </location>
</feature>
<feature type="sequence variant" id="VAR_063610" description="In dbSNP:rs758338586." evidence="8">
    <original>F</original>
    <variation>L</variation>
    <location>
        <position position="545"/>
    </location>
</feature>
<feature type="sequence variant" id="VAR_063611" description="In SPG7." evidence="8">
    <location>
        <position position="581"/>
    </location>
</feature>
<feature type="sequence variant" id="VAR_063612" description="In SPG7; function impaired; dbSNP:rs267607085." evidence="11">
    <original>W</original>
    <variation>C</variation>
    <location>
        <position position="583"/>
    </location>
</feature>
<feature type="sequence variant" id="VAR_063613" description="In dbSNP:rs370852816." evidence="8">
    <original>A</original>
    <variation>T</variation>
    <location>
        <position position="603"/>
    </location>
</feature>
<feature type="sequence variant" id="VAR_048117" description="In dbSNP:rs17783943.">
    <original>F</original>
    <variation>C</variation>
    <location>
        <position position="623"/>
    </location>
</feature>
<feature type="sequence variant" id="VAR_063614" description="Might be implicated in the hereditary spastic paraplegia phenotype; dbSNP:rs864622507." evidence="8">
    <original>S</original>
    <variation>L</variation>
    <location>
        <position position="635"/>
    </location>
</feature>
<feature type="sequence variant" id="VAR_059086" description="In dbSNP:rs2099104." evidence="8">
    <original>S</original>
    <variation>T</variation>
    <location>
        <position position="645"/>
    </location>
</feature>
<feature type="sequence variant" id="VAR_063615" description="Might be implicated in the hereditary spastic paraplegia phenotype." evidence="8">
    <original>D</original>
    <variation>H</variation>
    <location>
        <position position="650"/>
    </location>
</feature>
<feature type="sequence variant" id="VAR_017434" description="In dbSNP:rs12960." evidence="8 11">
    <original>R</original>
    <variation>Q</variation>
    <location>
        <position position="688"/>
    </location>
</feature>
<feature type="sequence variant" id="VAR_045898" description="In SPG7; dbSNP:rs121918357." evidence="9">
    <original>S</original>
    <variation>T</variation>
    <location>
        <position position="692"/>
    </location>
</feature>
<feature type="sequence variant" id="VAR_048118" description="In dbSNP:rs35749032." evidence="8">
    <original>N</original>
    <variation>D</variation>
    <location>
        <position position="730"/>
    </location>
</feature>
<feature type="mutagenesis site" description="Abolished metalloprotease activity." evidence="17">
    <original>HESG</original>
    <variation>GGSS</variation>
    <location>
        <begin position="574"/>
        <end position="577"/>
    </location>
</feature>
<feature type="mutagenesis site" description="Loss of proteolytic activity but no loss of interaction with PPIF; when associated with G-575 and S-577." evidence="13">
    <original>H</original>
    <variation>G</variation>
    <location>
        <position position="574"/>
    </location>
</feature>
<feature type="mutagenesis site" description="Loss of proteolytic activity but no loss of interaction with PPIF; when associated with G-574 and S-577." evidence="13">
    <original>E</original>
    <variation>G</variation>
    <location>
        <position position="575"/>
    </location>
</feature>
<feature type="mutagenesis site" description="No loss of interaction with PPIF. Loss of proteolytic activity but no loss of interaction with PPIF; when associated with G-574 and G-575." evidence="13">
    <original>G</original>
    <variation>S</variation>
    <location>
        <position position="577"/>
    </location>
</feature>
<feature type="sequence conflict" description="In Ref. 2; AAD28099." evidence="21" ref="2">
    <original>R</original>
    <variation>G</variation>
    <location>
        <position position="12"/>
    </location>
</feature>
<feature type="sequence conflict" description="In Ref. 3; AAH36104." evidence="21" ref="3">
    <original>P</original>
    <variation>A</variation>
    <location>
        <position position="376"/>
    </location>
</feature>
<feature type="helix" evidence="24">
    <location>
        <begin position="315"/>
        <end position="329"/>
    </location>
</feature>
<feature type="strand" evidence="24">
    <location>
        <begin position="344"/>
        <end position="349"/>
    </location>
</feature>
<feature type="helix" evidence="24">
    <location>
        <begin position="355"/>
        <end position="366"/>
    </location>
</feature>
<feature type="strand" evidence="24">
    <location>
        <begin position="370"/>
        <end position="374"/>
    </location>
</feature>
<feature type="turn" evidence="24">
    <location>
        <begin position="375"/>
        <end position="378"/>
    </location>
</feature>
<feature type="strand" evidence="24">
    <location>
        <begin position="379"/>
        <end position="382"/>
    </location>
</feature>
<feature type="helix" evidence="24">
    <location>
        <begin position="385"/>
        <end position="399"/>
    </location>
</feature>
<feature type="strand" evidence="24">
    <location>
        <begin position="402"/>
        <end position="408"/>
    </location>
</feature>
<feature type="helix" evidence="24">
    <location>
        <begin position="431"/>
        <end position="441"/>
    </location>
</feature>
<feature type="strand" evidence="24">
    <location>
        <begin position="449"/>
        <end position="456"/>
    </location>
</feature>
<feature type="helix" evidence="24">
    <location>
        <begin position="458"/>
        <end position="462"/>
    </location>
</feature>
<feature type="helix" evidence="24">
    <location>
        <begin position="464"/>
        <end position="466"/>
    </location>
</feature>
<feature type="strand" evidence="24">
    <location>
        <begin position="473"/>
        <end position="476"/>
    </location>
</feature>
<feature type="helix" evidence="24">
    <location>
        <begin position="482"/>
        <end position="495"/>
    </location>
</feature>
<feature type="helix" evidence="24">
    <location>
        <begin position="502"/>
        <end position="511"/>
    </location>
</feature>
<feature type="helix" evidence="24">
    <location>
        <begin position="518"/>
        <end position="529"/>
    </location>
</feature>
<feature type="helix" evidence="24">
    <location>
        <begin position="545"/>
        <end position="557"/>
    </location>
</feature>
<keyword id="KW-0002">3D-structure</keyword>
<keyword id="KW-0025">Alternative splicing</keyword>
<keyword id="KW-0067">ATP-binding</keyword>
<keyword id="KW-0225">Disease variant</keyword>
<keyword id="KW-0890">Hereditary spastic paraplegia</keyword>
<keyword id="KW-0378">Hydrolase</keyword>
<keyword id="KW-0472">Membrane</keyword>
<keyword id="KW-0479">Metal-binding</keyword>
<keyword id="KW-0482">Metalloprotease</keyword>
<keyword id="KW-0496">Mitochondrion</keyword>
<keyword id="KW-0999">Mitochondrion inner membrane</keyword>
<keyword id="KW-0523">Neurodegeneration</keyword>
<keyword id="KW-0944">Nitration</keyword>
<keyword id="KW-0547">Nucleotide-binding</keyword>
<keyword id="KW-1065">Osteogenesis imperfecta</keyword>
<keyword id="KW-0645">Protease</keyword>
<keyword id="KW-1267">Proteomics identification</keyword>
<keyword id="KW-1185">Reference proteome</keyword>
<keyword id="KW-0809">Transit peptide</keyword>
<keyword id="KW-0812">Transmembrane</keyword>
<keyword id="KW-1133">Transmembrane helix</keyword>
<keyword id="KW-0862">Zinc</keyword>
<sequence>MAVLLLLLRALRRGPGPGPRPLWGPGPAWSPGFPARPGRGRPYMASRPPGDLAEAGGRALQSLQLRLLTPTFEGINGLLLKQHLVQNPVRLWQLLGGTFYFNTSRLKQKNKEKDKSKGKAPEEDEEERRRRERDDQMYRERLRTLLVIAVVMSLLNALSTSGGSISWNDFVHEMLAKGEVQRVQVVPESDVVEVYLHPGAVVFGRPRLALMYRMQVANIDKFEEKLRAAEDELNIEAKDRIPVSYKRTGFFGNALYSVGMTAVGLAILWYVFRLAGMTGREGGFSAFNQLKMARFTIVDGKMGKGVSFKDVAGMHEAKLEVREFVDYLKSPERFLQLGAKVPKGALLLGPPGCGKTLLAKAVATEAQVPFLAMAGPEFVEVIGGLGAARVRSLFKEARARAPCIVYIDEIDAVGKKRSTTMSGFSNTEEEQTLNQLLVEMDGMGTTDHVIVLASTNRADILDGALMRPGRLDRHVFIDLPTLQERREIFEQHLKSLKLTQSSTFYSQRLAELTPGFSGADIANICNEAALHAAREGHTSVHTLNFEYAVERVLAGTAKKSKILSKEEQKVVAFHESGHALVGWMLEHTEAVMKVSITPRTNAALGFAQMLPRDQHLFTKEQLFERMCMALGGRASEALSFNEVTSGAQDDLRKVTRIAYSMVKQFGMAPGIGPISFPEAQEGLMGIGRRPFSQGLQQMMDHEARLLVAKAYRHTEKVLQDNLDKLQALANALLEKEVINYEDIEALIGPPPHGPKKMIAPQRWIDAQREKQDLGEEETEETQQPPLGGEEPTWPK</sequence>
<evidence type="ECO:0000250" key="1">
    <source>
        <dbReference type="UniProtKB" id="Q3ULF4"/>
    </source>
</evidence>
<evidence type="ECO:0000250" key="2">
    <source>
        <dbReference type="UniProtKB" id="Q9WZ49"/>
    </source>
</evidence>
<evidence type="ECO:0000250" key="3">
    <source>
        <dbReference type="UniProtKB" id="Q9Y4W6"/>
    </source>
</evidence>
<evidence type="ECO:0000255" key="4"/>
<evidence type="ECO:0000256" key="5">
    <source>
        <dbReference type="SAM" id="MobiDB-lite"/>
    </source>
</evidence>
<evidence type="ECO:0000269" key="6">
    <source>
    </source>
</evidence>
<evidence type="ECO:0000269" key="7">
    <source>
    </source>
</evidence>
<evidence type="ECO:0000269" key="8">
    <source>
    </source>
</evidence>
<evidence type="ECO:0000269" key="9">
    <source>
    </source>
</evidence>
<evidence type="ECO:0000269" key="10">
    <source>
    </source>
</evidence>
<evidence type="ECO:0000269" key="11">
    <source>
    </source>
</evidence>
<evidence type="ECO:0000269" key="12">
    <source>
    </source>
</evidence>
<evidence type="ECO:0000269" key="13">
    <source>
    </source>
</evidence>
<evidence type="ECO:0000269" key="14">
    <source>
    </source>
</evidence>
<evidence type="ECO:0000269" key="15">
    <source>
    </source>
</evidence>
<evidence type="ECO:0000269" key="16">
    <source>
    </source>
</evidence>
<evidence type="ECO:0000269" key="17">
    <source>
    </source>
</evidence>
<evidence type="ECO:0000269" key="18">
    <source>
    </source>
</evidence>
<evidence type="ECO:0000303" key="19">
    <source>
    </source>
</evidence>
<evidence type="ECO:0000303" key="20">
    <source>
    </source>
</evidence>
<evidence type="ECO:0000305" key="21"/>
<evidence type="ECO:0000312" key="22">
    <source>
        <dbReference type="HGNC" id="HGNC:11237"/>
    </source>
</evidence>
<evidence type="ECO:0007744" key="23">
    <source>
        <dbReference type="PDB" id="2QZ4"/>
    </source>
</evidence>
<evidence type="ECO:0007829" key="24">
    <source>
        <dbReference type="PDB" id="2QZ4"/>
    </source>
</evidence>
<gene>
    <name evidence="22" type="primary">SPG7</name>
    <name type="synonym">CAR</name>
    <name evidence="22" type="synonym">CMAR</name>
    <name type="synonym">PGN</name>
</gene>
<dbReference type="EC" id="3.4.24.-" evidence="6 16 17"/>
<dbReference type="EC" id="3.6.-.-" evidence="3"/>
<dbReference type="EMBL" id="Y16610">
    <property type="protein sequence ID" value="CAA76314.1"/>
    <property type="molecule type" value="mRNA"/>
</dbReference>
<dbReference type="EMBL" id="AF080525">
    <property type="protein sequence ID" value="AAD28099.1"/>
    <property type="molecule type" value="Genomic_DNA"/>
</dbReference>
<dbReference type="EMBL" id="AF080511">
    <property type="protein sequence ID" value="AAD28099.1"/>
    <property type="status" value="JOINED"/>
    <property type="molecule type" value="Genomic_DNA"/>
</dbReference>
<dbReference type="EMBL" id="AF080512">
    <property type="protein sequence ID" value="AAD28099.1"/>
    <property type="status" value="JOINED"/>
    <property type="molecule type" value="Genomic_DNA"/>
</dbReference>
<dbReference type="EMBL" id="AF080513">
    <property type="protein sequence ID" value="AAD28099.1"/>
    <property type="status" value="JOINED"/>
    <property type="molecule type" value="Genomic_DNA"/>
</dbReference>
<dbReference type="EMBL" id="AF080514">
    <property type="protein sequence ID" value="AAD28099.1"/>
    <property type="status" value="JOINED"/>
    <property type="molecule type" value="Genomic_DNA"/>
</dbReference>
<dbReference type="EMBL" id="AF080515">
    <property type="protein sequence ID" value="AAD28099.1"/>
    <property type="status" value="JOINED"/>
    <property type="molecule type" value="Genomic_DNA"/>
</dbReference>
<dbReference type="EMBL" id="AF080516">
    <property type="protein sequence ID" value="AAD28099.1"/>
    <property type="status" value="JOINED"/>
    <property type="molecule type" value="Genomic_DNA"/>
</dbReference>
<dbReference type="EMBL" id="AF080517">
    <property type="protein sequence ID" value="AAD28099.1"/>
    <property type="status" value="JOINED"/>
    <property type="molecule type" value="Genomic_DNA"/>
</dbReference>
<dbReference type="EMBL" id="AF080518">
    <property type="protein sequence ID" value="AAD28099.1"/>
    <property type="status" value="JOINED"/>
    <property type="molecule type" value="Genomic_DNA"/>
</dbReference>
<dbReference type="EMBL" id="AF080519">
    <property type="protein sequence ID" value="AAD28099.1"/>
    <property type="status" value="JOINED"/>
    <property type="molecule type" value="Genomic_DNA"/>
</dbReference>
<dbReference type="EMBL" id="AF080520">
    <property type="protein sequence ID" value="AAD28099.1"/>
    <property type="status" value="JOINED"/>
    <property type="molecule type" value="Genomic_DNA"/>
</dbReference>
<dbReference type="EMBL" id="AF080521">
    <property type="protein sequence ID" value="AAD28099.1"/>
    <property type="status" value="JOINED"/>
    <property type="molecule type" value="Genomic_DNA"/>
</dbReference>
<dbReference type="EMBL" id="AF080522">
    <property type="protein sequence ID" value="AAD28099.1"/>
    <property type="status" value="JOINED"/>
    <property type="molecule type" value="Genomic_DNA"/>
</dbReference>
<dbReference type="EMBL" id="AF080523">
    <property type="protein sequence ID" value="AAD28099.1"/>
    <property type="status" value="JOINED"/>
    <property type="molecule type" value="Genomic_DNA"/>
</dbReference>
<dbReference type="EMBL" id="AF080524">
    <property type="protein sequence ID" value="AAD28099.1"/>
    <property type="status" value="JOINED"/>
    <property type="molecule type" value="Genomic_DNA"/>
</dbReference>
<dbReference type="EMBL" id="BC007692">
    <property type="status" value="NOT_ANNOTATED_CDS"/>
    <property type="molecule type" value="mRNA"/>
</dbReference>
<dbReference type="EMBL" id="BC035929">
    <property type="protein sequence ID" value="AAH35929.1"/>
    <property type="status" value="ALT_INIT"/>
    <property type="molecule type" value="mRNA"/>
</dbReference>
<dbReference type="EMBL" id="BC036104">
    <property type="protein sequence ID" value="AAH36104.1"/>
    <property type="molecule type" value="mRNA"/>
</dbReference>
<dbReference type="EMBL" id="BC110530">
    <property type="status" value="NOT_ANNOTATED_CDS"/>
    <property type="molecule type" value="mRNA"/>
</dbReference>
<dbReference type="EMBL" id="BC110531">
    <property type="status" value="NOT_ANNOTATED_CDS"/>
    <property type="molecule type" value="mRNA"/>
</dbReference>
<dbReference type="CCDS" id="CCDS10977.1">
    <molecule id="Q9UQ90-1"/>
</dbReference>
<dbReference type="CCDS" id="CCDS10978.1">
    <molecule id="Q9UQ90-2"/>
</dbReference>
<dbReference type="RefSeq" id="NP_003110.1">
    <molecule id="Q9UQ90-1"/>
    <property type="nucleotide sequence ID" value="NM_003119.4"/>
</dbReference>
<dbReference type="RefSeq" id="NP_955399.1">
    <molecule id="Q9UQ90-2"/>
    <property type="nucleotide sequence ID" value="NM_199367.3"/>
</dbReference>
<dbReference type="RefSeq" id="XP_016879088.1">
    <property type="nucleotide sequence ID" value="XM_017023599.1"/>
</dbReference>
<dbReference type="PDB" id="2QZ4">
    <property type="method" value="X-ray"/>
    <property type="resolution" value="2.22 A"/>
    <property type="chains" value="A=305-565"/>
</dbReference>
<dbReference type="PDBsum" id="2QZ4"/>
<dbReference type="SMR" id="Q9UQ90"/>
<dbReference type="BioGRID" id="112565">
    <property type="interactions" value="146"/>
</dbReference>
<dbReference type="ComplexPortal" id="CPX-10319">
    <property type="entry name" value="m-AAA protease complex, AFG3L2-SPG7 variant"/>
</dbReference>
<dbReference type="CORUM" id="Q9UQ90"/>
<dbReference type="FunCoup" id="Q9UQ90">
    <property type="interactions" value="1570"/>
</dbReference>
<dbReference type="IntAct" id="Q9UQ90">
    <property type="interactions" value="100"/>
</dbReference>
<dbReference type="MINT" id="Q9UQ90"/>
<dbReference type="STRING" id="9606.ENSP00000495795"/>
<dbReference type="MEROPS" id="M41.006"/>
<dbReference type="GlyGen" id="Q9UQ90">
    <property type="glycosylation" value="2 sites, 1 O-linked glycan (1 site)"/>
</dbReference>
<dbReference type="iPTMnet" id="Q9UQ90"/>
<dbReference type="PhosphoSitePlus" id="Q9UQ90"/>
<dbReference type="BioMuta" id="SPG7"/>
<dbReference type="DMDM" id="116242796"/>
<dbReference type="jPOST" id="Q9UQ90"/>
<dbReference type="MassIVE" id="Q9UQ90"/>
<dbReference type="PaxDb" id="9606-ENSP00000268704"/>
<dbReference type="PeptideAtlas" id="Q9UQ90"/>
<dbReference type="ProteomicsDB" id="85528">
    <molecule id="Q9UQ90-1"/>
</dbReference>
<dbReference type="ProteomicsDB" id="85529">
    <molecule id="Q9UQ90-2"/>
</dbReference>
<dbReference type="Pumba" id="Q9UQ90"/>
<dbReference type="Antibodypedia" id="30863">
    <property type="antibodies" value="415 antibodies from 21 providers"/>
</dbReference>
<dbReference type="DNASU" id="6687"/>
<dbReference type="Ensembl" id="ENST00000341316.6">
    <molecule id="Q9UQ90-2"/>
    <property type="protein sequence ID" value="ENSP00000341157.2"/>
    <property type="gene ID" value="ENSG00000197912.16"/>
</dbReference>
<dbReference type="Ensembl" id="ENST00000645818.2">
    <molecule id="Q9UQ90-1"/>
    <property type="protein sequence ID" value="ENSP00000495795.2"/>
    <property type="gene ID" value="ENSG00000197912.16"/>
</dbReference>
<dbReference type="Ensembl" id="ENST00000646263.1">
    <molecule id="Q9UQ90-2"/>
    <property type="protein sequence ID" value="ENSP00000494119.1"/>
    <property type="gene ID" value="ENSG00000197912.16"/>
</dbReference>
<dbReference type="GeneID" id="6687"/>
<dbReference type="KEGG" id="hsa:6687"/>
<dbReference type="MANE-Select" id="ENST00000645818.2">
    <property type="protein sequence ID" value="ENSP00000495795.2"/>
    <property type="RefSeq nucleotide sequence ID" value="NM_003119.4"/>
    <property type="RefSeq protein sequence ID" value="NP_003110.1"/>
</dbReference>
<dbReference type="UCSC" id="uc002fni.4">
    <molecule id="Q9UQ90-1"/>
    <property type="organism name" value="human"/>
</dbReference>
<dbReference type="AGR" id="HGNC:11237"/>
<dbReference type="CTD" id="6687"/>
<dbReference type="DisGeNET" id="6687"/>
<dbReference type="GeneCards" id="SPG7"/>
<dbReference type="GeneReviews" id="SPG7"/>
<dbReference type="HGNC" id="HGNC:11237">
    <property type="gene designation" value="SPG7"/>
</dbReference>
<dbReference type="HPA" id="ENSG00000197912">
    <property type="expression patterns" value="Low tissue specificity"/>
</dbReference>
<dbReference type="MalaCards" id="SPG7"/>
<dbReference type="MIM" id="602783">
    <property type="type" value="gene"/>
</dbReference>
<dbReference type="MIM" id="607259">
    <property type="type" value="phenotype"/>
</dbReference>
<dbReference type="neXtProt" id="NX_Q9UQ90"/>
<dbReference type="OpenTargets" id="ENSG00000197912"/>
<dbReference type="Orphanet" id="35689">
    <property type="disease" value="Primary lateral sclerosis"/>
</dbReference>
<dbReference type="Orphanet" id="99013">
    <property type="disease" value="Spastic paraplegia type 7"/>
</dbReference>
<dbReference type="PharmGKB" id="PA36067"/>
<dbReference type="VEuPathDB" id="HostDB:ENSG00000197912"/>
<dbReference type="eggNOG" id="KOG0731">
    <property type="taxonomic scope" value="Eukaryota"/>
</dbReference>
<dbReference type="GeneTree" id="ENSGT00940000156329"/>
<dbReference type="HOGENOM" id="CLU_000688_23_2_1"/>
<dbReference type="InParanoid" id="Q9UQ90"/>
<dbReference type="OMA" id="RMKSMKS"/>
<dbReference type="OrthoDB" id="1413014at2759"/>
<dbReference type="PAN-GO" id="Q9UQ90">
    <property type="GO annotations" value="3 GO annotations based on evolutionary models"/>
</dbReference>
<dbReference type="PhylomeDB" id="Q9UQ90"/>
<dbReference type="TreeFam" id="TF105003"/>
<dbReference type="BRENDA" id="3.4.24.B18">
    <property type="organism ID" value="2681"/>
</dbReference>
<dbReference type="PathwayCommons" id="Q9UQ90"/>
<dbReference type="Reactome" id="R-HSA-8949664">
    <property type="pathway name" value="Processing of SMDT1"/>
</dbReference>
<dbReference type="Reactome" id="R-HSA-9837999">
    <property type="pathway name" value="Mitochondrial protein degradation"/>
</dbReference>
<dbReference type="SignaLink" id="Q9UQ90"/>
<dbReference type="BioGRID-ORCS" id="6687">
    <property type="hits" value="11 hits in 1157 CRISPR screens"/>
</dbReference>
<dbReference type="ChiTaRS" id="SPG7">
    <property type="organism name" value="human"/>
</dbReference>
<dbReference type="EvolutionaryTrace" id="Q9UQ90"/>
<dbReference type="GeneWiki" id="Paraplegin"/>
<dbReference type="GeneWiki" id="SPG7"/>
<dbReference type="GenomeRNAi" id="6687"/>
<dbReference type="Pharos" id="Q9UQ90">
    <property type="development level" value="Tbio"/>
</dbReference>
<dbReference type="PRO" id="PR:Q9UQ90"/>
<dbReference type="Proteomes" id="UP000005640">
    <property type="component" value="Chromosome 16"/>
</dbReference>
<dbReference type="RNAct" id="Q9UQ90">
    <property type="molecule type" value="protein"/>
</dbReference>
<dbReference type="Bgee" id="ENSG00000197912">
    <property type="expression patterns" value="Expressed in primordial germ cell in gonad and 203 other cell types or tissues"/>
</dbReference>
<dbReference type="ExpressionAtlas" id="Q9UQ90">
    <property type="expression patterns" value="baseline and differential"/>
</dbReference>
<dbReference type="GO" id="GO:1904115">
    <property type="term" value="C:axon cytoplasm"/>
    <property type="evidence" value="ECO:0007669"/>
    <property type="project" value="GOC"/>
</dbReference>
<dbReference type="GO" id="GO:0005745">
    <property type="term" value="C:m-AAA complex"/>
    <property type="evidence" value="ECO:0000314"/>
    <property type="project" value="UniProtKB"/>
</dbReference>
<dbReference type="GO" id="GO:0005743">
    <property type="term" value="C:mitochondrial inner membrane"/>
    <property type="evidence" value="ECO:0000314"/>
    <property type="project" value="UniProt"/>
</dbReference>
<dbReference type="GO" id="GO:0005757">
    <property type="term" value="C:mitochondrial permeability transition pore complex"/>
    <property type="evidence" value="ECO:0000314"/>
    <property type="project" value="UniProtKB"/>
</dbReference>
<dbReference type="GO" id="GO:0005739">
    <property type="term" value="C:mitochondrion"/>
    <property type="evidence" value="ECO:0006056"/>
    <property type="project" value="FlyBase"/>
</dbReference>
<dbReference type="GO" id="GO:0005524">
    <property type="term" value="F:ATP binding"/>
    <property type="evidence" value="ECO:0007669"/>
    <property type="project" value="UniProtKB-KW"/>
</dbReference>
<dbReference type="GO" id="GO:0016887">
    <property type="term" value="F:ATP hydrolysis activity"/>
    <property type="evidence" value="ECO:0007669"/>
    <property type="project" value="InterPro"/>
</dbReference>
<dbReference type="GO" id="GO:0004176">
    <property type="term" value="F:ATP-dependent peptidase activity"/>
    <property type="evidence" value="ECO:0007669"/>
    <property type="project" value="InterPro"/>
</dbReference>
<dbReference type="GO" id="GO:0004222">
    <property type="term" value="F:metalloendopeptidase activity"/>
    <property type="evidence" value="ECO:0000314"/>
    <property type="project" value="UniProtKB"/>
</dbReference>
<dbReference type="GO" id="GO:0008233">
    <property type="term" value="F:peptidase activity"/>
    <property type="evidence" value="ECO:0000304"/>
    <property type="project" value="ProtInc"/>
</dbReference>
<dbReference type="GO" id="GO:0051082">
    <property type="term" value="F:unfolded protein binding"/>
    <property type="evidence" value="ECO:0000304"/>
    <property type="project" value="ProtInc"/>
</dbReference>
<dbReference type="GO" id="GO:0008270">
    <property type="term" value="F:zinc ion binding"/>
    <property type="evidence" value="ECO:0007669"/>
    <property type="project" value="InterPro"/>
</dbReference>
<dbReference type="GO" id="GO:0008089">
    <property type="term" value="P:anterograde axonal transport"/>
    <property type="evidence" value="ECO:0007669"/>
    <property type="project" value="Ensembl"/>
</dbReference>
<dbReference type="GO" id="GO:1902686">
    <property type="term" value="P:mitochondrial outer membrane permeabilization involved in programmed cell death"/>
    <property type="evidence" value="ECO:0000315"/>
    <property type="project" value="UniProtKB"/>
</dbReference>
<dbReference type="GO" id="GO:0034982">
    <property type="term" value="P:mitochondrial protein processing"/>
    <property type="evidence" value="ECO:0000318"/>
    <property type="project" value="GO_Central"/>
</dbReference>
<dbReference type="GO" id="GO:0007399">
    <property type="term" value="P:nervous system development"/>
    <property type="evidence" value="ECO:0000304"/>
    <property type="project" value="ProtInc"/>
</dbReference>
<dbReference type="GO" id="GO:0006508">
    <property type="term" value="P:proteolysis"/>
    <property type="evidence" value="ECO:0000304"/>
    <property type="project" value="ProtInc"/>
</dbReference>
<dbReference type="GO" id="GO:0110097">
    <property type="term" value="P:regulation of calcium import into the mitochondrion"/>
    <property type="evidence" value="ECO:0000314"/>
    <property type="project" value="UniProtKB"/>
</dbReference>
<dbReference type="GO" id="GO:0046902">
    <property type="term" value="P:regulation of mitochondrial membrane permeability"/>
    <property type="evidence" value="ECO:0000315"/>
    <property type="project" value="UniProtKB"/>
</dbReference>
<dbReference type="CDD" id="cd19501">
    <property type="entry name" value="RecA-like_FtsH"/>
    <property type="match status" value="1"/>
</dbReference>
<dbReference type="FunFam" id="3.40.50.300:FF:000277">
    <property type="entry name" value="ATP-dependent zinc metalloprotease FtsH"/>
    <property type="match status" value="1"/>
</dbReference>
<dbReference type="FunFam" id="1.10.8.60:FF:000033">
    <property type="entry name" value="paraplegin isoform X1"/>
    <property type="match status" value="1"/>
</dbReference>
<dbReference type="FunFam" id="1.20.58.760:FF:000004">
    <property type="entry name" value="paraplegin isoform X1"/>
    <property type="match status" value="1"/>
</dbReference>
<dbReference type="FunFam" id="3.40.1690.20:FF:000002">
    <property type="entry name" value="paraplegin isoform X1"/>
    <property type="match status" value="1"/>
</dbReference>
<dbReference type="Gene3D" id="1.10.8.60">
    <property type="match status" value="1"/>
</dbReference>
<dbReference type="Gene3D" id="3.40.1690.20">
    <property type="match status" value="1"/>
</dbReference>
<dbReference type="Gene3D" id="3.40.50.300">
    <property type="entry name" value="P-loop containing nucleotide triphosphate hydrolases"/>
    <property type="match status" value="1"/>
</dbReference>
<dbReference type="Gene3D" id="1.20.58.760">
    <property type="entry name" value="Peptidase M41"/>
    <property type="match status" value="1"/>
</dbReference>
<dbReference type="HAMAP" id="MF_01458">
    <property type="entry name" value="FtsH"/>
    <property type="match status" value="1"/>
</dbReference>
<dbReference type="InterPro" id="IPR003593">
    <property type="entry name" value="AAA+_ATPase"/>
</dbReference>
<dbReference type="InterPro" id="IPR041569">
    <property type="entry name" value="AAA_lid_3"/>
</dbReference>
<dbReference type="InterPro" id="IPR050928">
    <property type="entry name" value="ATP-dep_Zn_Metalloprotease"/>
</dbReference>
<dbReference type="InterPro" id="IPR003959">
    <property type="entry name" value="ATPase_AAA_core"/>
</dbReference>
<dbReference type="InterPro" id="IPR005936">
    <property type="entry name" value="FtsH"/>
</dbReference>
<dbReference type="InterPro" id="IPR027417">
    <property type="entry name" value="P-loop_NTPase"/>
</dbReference>
<dbReference type="InterPro" id="IPR011546">
    <property type="entry name" value="Pept_M41_FtsH_extracell"/>
</dbReference>
<dbReference type="InterPro" id="IPR000642">
    <property type="entry name" value="Peptidase_M41"/>
</dbReference>
<dbReference type="InterPro" id="IPR037219">
    <property type="entry name" value="Peptidase_M41-like"/>
</dbReference>
<dbReference type="NCBIfam" id="TIGR01241">
    <property type="entry name" value="FtsH_fam"/>
    <property type="match status" value="1"/>
</dbReference>
<dbReference type="PANTHER" id="PTHR43655">
    <property type="entry name" value="ATP-DEPENDENT PROTEASE"/>
    <property type="match status" value="1"/>
</dbReference>
<dbReference type="PANTHER" id="PTHR43655:SF8">
    <property type="entry name" value="PARAPLEGIN"/>
    <property type="match status" value="1"/>
</dbReference>
<dbReference type="Pfam" id="PF00004">
    <property type="entry name" value="AAA"/>
    <property type="match status" value="1"/>
</dbReference>
<dbReference type="Pfam" id="PF17862">
    <property type="entry name" value="AAA_lid_3"/>
    <property type="match status" value="1"/>
</dbReference>
<dbReference type="Pfam" id="PF06480">
    <property type="entry name" value="FtsH_ext"/>
    <property type="match status" value="1"/>
</dbReference>
<dbReference type="Pfam" id="PF01434">
    <property type="entry name" value="Peptidase_M41"/>
    <property type="match status" value="1"/>
</dbReference>
<dbReference type="SMART" id="SM00382">
    <property type="entry name" value="AAA"/>
    <property type="match status" value="1"/>
</dbReference>
<dbReference type="SUPFAM" id="SSF140990">
    <property type="entry name" value="FtsH protease domain-like"/>
    <property type="match status" value="1"/>
</dbReference>
<dbReference type="SUPFAM" id="SSF52540">
    <property type="entry name" value="P-loop containing nucleoside triphosphate hydrolases"/>
    <property type="match status" value="1"/>
</dbReference>
<proteinExistence type="evidence at protein level"/>
<name>SPG7_HUMAN</name>
<organism>
    <name type="scientific">Homo sapiens</name>
    <name type="common">Human</name>
    <dbReference type="NCBI Taxonomy" id="9606"/>
    <lineage>
        <taxon>Eukaryota</taxon>
        <taxon>Metazoa</taxon>
        <taxon>Chordata</taxon>
        <taxon>Craniata</taxon>
        <taxon>Vertebrata</taxon>
        <taxon>Euteleostomi</taxon>
        <taxon>Mammalia</taxon>
        <taxon>Eutheria</taxon>
        <taxon>Euarchontoglires</taxon>
        <taxon>Primates</taxon>
        <taxon>Haplorrhini</taxon>
        <taxon>Catarrhini</taxon>
        <taxon>Hominidae</taxon>
        <taxon>Homo</taxon>
    </lineage>
</organism>
<comment type="function">
    <text evidence="1 3 6 13 16 17 18">Catalytic component of the m-AAA protease, a protease that plays a key role in proteostasis of inner mitochondrial membrane proteins, and which is essential for axonal and neuron development (PubMed:11549317, PubMed:28396416, PubMed:31097542, PubMed:9635427). SPG7 possesses both ATPase and protease activities: the ATPase activity is required to unfold substrates, threading them into the internal proteolytic cavity for hydrolysis into small peptide fragments (By similarity). The m-AAA protease exerts a dual role in the mitochondrial inner membrane: it mediates the processing of specific regulatory proteins and ensures protein quality control by degrading misfolded polypeptides (By similarity). Mediates protein maturation of the mitochondrial ribosomal subunit MRPL32/bL32m by catalyzing the cleavage of the presequence of MRPL32/bL32m prior to assembly into the mitochondrial ribosome (By similarity). Acts as a regulator of calcium in neurons by mediating degradation of SMDT1/EMRE before its assembly with the uniporter complex, limiting the availability of SMDT1/EMRE for MCU assembly and promoting efficient assembly of gatekeeper subunits with MCU (PubMed:28396416, PubMed:31097542). Also regulates mitochondrial calcium by catalyzing degradation of MCU (PubMed:31097542). Plays a role in the formation and regulation of the mitochondrial permeability transition pore (mPTP) and its proteolytic activity is dispensable for this function (PubMed:26387735).</text>
</comment>
<comment type="catalytic activity">
    <reaction evidence="3">
        <text>ATP + H2O = ADP + phosphate + H(+)</text>
        <dbReference type="Rhea" id="RHEA:13065"/>
        <dbReference type="ChEBI" id="CHEBI:15377"/>
        <dbReference type="ChEBI" id="CHEBI:15378"/>
        <dbReference type="ChEBI" id="CHEBI:30616"/>
        <dbReference type="ChEBI" id="CHEBI:43474"/>
        <dbReference type="ChEBI" id="CHEBI:456216"/>
    </reaction>
    <physiologicalReaction direction="left-to-right" evidence="3">
        <dbReference type="Rhea" id="RHEA:13066"/>
    </physiologicalReaction>
</comment>
<comment type="cofactor">
    <cofactor evidence="3">
        <name>Zn(2+)</name>
        <dbReference type="ChEBI" id="CHEBI:29105"/>
    </cofactor>
    <text evidence="3">Binds 1 zinc ion per subunit.</text>
</comment>
<comment type="subunit">
    <text evidence="7 13 15 16">Forms heterooligomers with AFG3L2; the m-AAA protease is composed of heterohexamers of AFG3L2 and SPG7 (PubMed:14623864, PubMed:28396416). Component of the mitochondrial permeability transition pore complex (mPTPC), at least composed of SPG7, VDAC1 and PPIF (PubMed:26387735). Interacts with MAIP1 (PubMed:27499296).</text>
</comment>
<comment type="interaction">
    <interactant intactId="EBI-717201">
        <id>Q9UQ90</id>
    </interactant>
    <interactant intactId="EBI-748961">
        <id>O95273</id>
        <label>CCNDBP1</label>
    </interactant>
    <organismsDiffer>false</organismsDiffer>
    <experiments>3</experiments>
</comment>
<comment type="interaction">
    <interactant intactId="EBI-717201">
        <id>Q9UQ90</id>
    </interactant>
    <interactant intactId="EBI-3867333">
        <id>A8MQ03</id>
        <label>CYSRT1</label>
    </interactant>
    <organismsDiffer>false</organismsDiffer>
    <experiments>3</experiments>
</comment>
<comment type="interaction">
    <interactant intactId="EBI-717201">
        <id>Q9UQ90</id>
    </interactant>
    <interactant intactId="EBI-304185">
        <id>P61978</id>
        <label>HNRNPK</label>
    </interactant>
    <organismsDiffer>false</organismsDiffer>
    <experiments>6</experiments>
</comment>
<comment type="interaction">
    <interactant intactId="EBI-717201">
        <id>Q9UQ90</id>
    </interactant>
    <interactant intactId="EBI-7060731">
        <id>P61978-2</id>
        <label>HNRNPK</label>
    </interactant>
    <organismsDiffer>false</organismsDiffer>
    <experiments>3</experiments>
</comment>
<comment type="interaction">
    <interactant intactId="EBI-717201">
        <id>Q9UQ90</id>
    </interactant>
    <interactant intactId="EBI-7116203">
        <id>O75031</id>
        <label>HSF2BP</label>
    </interactant>
    <organismsDiffer>false</organismsDiffer>
    <experiments>3</experiments>
</comment>
<comment type="interaction">
    <interactant intactId="EBI-717201">
        <id>Q9UQ90</id>
    </interactant>
    <interactant intactId="EBI-742808">
        <id>Q5VWX1</id>
        <label>KHDRBS2</label>
    </interactant>
    <organismsDiffer>false</organismsDiffer>
    <experiments>3</experiments>
</comment>
<comment type="interaction">
    <interactant intactId="EBI-717201">
        <id>Q9UQ90</id>
    </interactant>
    <interactant intactId="EBI-10171697">
        <id>Q6A162</id>
        <label>KRT40</label>
    </interactant>
    <organismsDiffer>false</organismsDiffer>
    <experiments>3</experiments>
</comment>
<comment type="interaction">
    <interactant intactId="EBI-717201">
        <id>Q9UQ90</id>
    </interactant>
    <interactant intactId="EBI-10172290">
        <id>P60409</id>
        <label>KRTAP10-7</label>
    </interactant>
    <organismsDiffer>false</organismsDiffer>
    <experiments>3</experiments>
</comment>
<comment type="interaction">
    <interactant intactId="EBI-717201">
        <id>Q9UQ90</id>
    </interactant>
    <interactant intactId="EBI-10172052">
        <id>P60411</id>
        <label>KRTAP10-9</label>
    </interactant>
    <organismsDiffer>false</organismsDiffer>
    <experiments>3</experiments>
</comment>
<comment type="interaction">
    <interactant intactId="EBI-717201">
        <id>Q9UQ90</id>
    </interactant>
    <interactant intactId="EBI-741037">
        <id>Q9BRK4</id>
        <label>LZTS2</label>
    </interactant>
    <organismsDiffer>false</organismsDiffer>
    <experiments>3</experiments>
</comment>
<comment type="interaction">
    <interactant intactId="EBI-717201">
        <id>Q9UQ90</id>
    </interactant>
    <interactant intactId="EBI-724076">
        <id>Q99750</id>
        <label>MDFI</label>
    </interactant>
    <organismsDiffer>false</organismsDiffer>
    <experiments>7</experiments>
</comment>
<comment type="interaction">
    <interactant intactId="EBI-717201">
        <id>Q9UQ90</id>
    </interactant>
    <interactant intactId="EBI-742948">
        <id>Q5JR59</id>
        <label>MTUS2</label>
    </interactant>
    <organismsDiffer>false</organismsDiffer>
    <experiments>4</experiments>
</comment>
<comment type="interaction">
    <interactant intactId="EBI-717201">
        <id>Q9UQ90</id>
    </interactant>
    <interactant intactId="EBI-713654">
        <id>Q9Y6M9</id>
        <label>NDUFB9</label>
    </interactant>
    <organismsDiffer>false</organismsDiffer>
    <experiments>2</experiments>
</comment>
<comment type="interaction">
    <interactant intactId="EBI-717201">
        <id>Q9UQ90</id>
    </interactant>
    <interactant intactId="EBI-945833">
        <id>Q7Z3S9</id>
        <label>NOTCH2NLA</label>
    </interactant>
    <organismsDiffer>false</organismsDiffer>
    <experiments>3</experiments>
</comment>
<comment type="interaction">
    <interactant intactId="EBI-717201">
        <id>Q9UQ90</id>
    </interactant>
    <interactant intactId="EBI-22310682">
        <id>P0DPK4</id>
        <label>NOTCH2NLC</label>
    </interactant>
    <organismsDiffer>false</organismsDiffer>
    <experiments>3</experiments>
</comment>
<comment type="interaction">
    <interactant intactId="EBI-717201">
        <id>Q9UQ90</id>
    </interactant>
    <interactant intactId="EBI-302345">
        <id>Q8ND90</id>
        <label>PNMA1</label>
    </interactant>
    <organismsDiffer>false</organismsDiffer>
    <experiments>7</experiments>
</comment>
<comment type="interaction">
    <interactant intactId="EBI-717201">
        <id>Q9UQ90</id>
    </interactant>
    <interactant intactId="EBI-355546">
        <id>P61289</id>
        <label>PSME3</label>
    </interactant>
    <organismsDiffer>false</organismsDiffer>
    <experiments>3</experiments>
</comment>
<comment type="interaction">
    <interactant intactId="EBI-717201">
        <id>Q9UQ90</id>
    </interactant>
    <interactant intactId="EBI-1050964">
        <id>O43586</id>
        <label>PSTPIP1</label>
    </interactant>
    <organismsDiffer>false</organismsDiffer>
    <experiments>3</experiments>
</comment>
<comment type="interaction">
    <interactant intactId="EBI-717201">
        <id>Q9UQ90</id>
    </interactant>
    <interactant intactId="EBI-740322">
        <id>Q93062</id>
        <label>RBPMS</label>
    </interactant>
    <organismsDiffer>false</organismsDiffer>
    <experiments>3</experiments>
</comment>
<comment type="subcellular location">
    <subcellularLocation>
        <location evidence="18">Mitochondrion inner membrane</location>
        <topology evidence="4">Multi-pass membrane protein</topology>
    </subcellularLocation>
</comment>
<comment type="alternative products">
    <event type="alternative splicing"/>
    <isoform>
        <id>Q9UQ90-1</id>
        <name>1</name>
        <sequence type="displayed"/>
    </isoform>
    <isoform>
        <id>Q9UQ90-2</id>
        <name>2</name>
        <sequence type="described" ref="VSP_009192 VSP_009193"/>
    </isoform>
</comment>
<comment type="tissue specificity">
    <text>Ubiquitous.</text>
</comment>
<comment type="PTM">
    <text evidence="1">Upon import into the mitochondrion, the N-terminal transit peptide is cleaved by the mitochondrial-processing peptidase (MPP) to generate an intermediate form which undergoes a second proteolytic cleavage mediated by proteases AFG3L2 removing an additional N-terminal fragment to generate the proteolytically active mature form.</text>
</comment>
<comment type="disease" evidence="8 9 11 14 18">
    <disease id="DI-01044">
        <name>Spastic paraplegia 7, autosomal recessive</name>
        <acronym>SPG7</acronym>
        <description>A form of spastic paraplegia, a neurodegenerative disorder characterized by a slow, gradual, progressive weakness and spasticity of the lower limbs. Rate of progression and the severity of symptoms are quite variable. Initial symptoms may include difficulty with balance, weakness and stiffness in the legs, muscle spasms, and dragging the toes when walking. In some forms of the disorder, bladder symptoms (such as incontinence) may appear, or the weakness and stiffness may spread to other parts of the body. SPG7 is a complex form. Additional clinical features are cerebellar syndrome, supranuclear palsy, and cognitive impairment, particularly disturbance of attention and executive functions.</description>
        <dbReference type="MIM" id="607259"/>
    </disease>
    <text>The disease is caused by variants affecting the gene represented in this entry.</text>
</comment>
<comment type="disease">
    <text evidence="12">Defects in SPG7 may cause autosomal recessive osteogenesis imperfecta (OI). Osteogenesis imperfecta defines a group of connective tissue disorders characterized by bone fragility and low bone mass. Clinical features of SPG7-related osteogenesis imperfecta include recurrent fractures, mild bone deformities, delayed tooth eruption, normal hearing and white sclera.</text>
</comment>
<comment type="similarity">
    <text evidence="21">In the N-terminal section; belongs to the AAA ATPase family.</text>
</comment>
<comment type="similarity">
    <text evidence="21">In the C-terminal section; belongs to the peptidase M41 family.</text>
</comment>
<comment type="caution">
    <text evidence="21">A CDS in the 3'-UTR of SPG7 mRNA had been erroneously identified as a cell matrix adhesion regulator and originally thought to be encoded by the CMAR gene. There is no experimental evidence for the production of endogenous CMAR protein.</text>
</comment>
<comment type="sequence caution" evidence="21">
    <conflict type="erroneous initiation">
        <sequence resource="EMBL-CDS" id="AAH35929"/>
    </conflict>
    <text>Extended N-terminus.</text>
</comment>
<comment type="sequence caution" evidence="21">
    <conflict type="erroneous termination">
        <sequence resource="EMBL" id="BC007692"/>
    </conflict>
    <text>Truncated C-terminus.</text>
</comment>